<protein>
    <recommendedName>
        <fullName evidence="1">V-type proton ATPase subunit c'</fullName>
        <shortName evidence="1">V-ATPase subunit c'</shortName>
    </recommendedName>
    <alternativeName>
        <fullName>Proteolipid protein vma11</fullName>
    </alternativeName>
    <alternativeName>
        <fullName>V-type proton ATPase 16 kDa proteolipid subunit 2</fullName>
        <shortName>V-ATPase 16 kDa proteolipid subunit 2</shortName>
    </alternativeName>
    <alternativeName>
        <fullName>Vacuolar proton pump 16 kDa proteolipid subunit 2</fullName>
    </alternativeName>
    <alternativeName>
        <fullName evidence="1">Vacuolar proton pump c' subunit</fullName>
    </alternativeName>
</protein>
<feature type="chain" id="PRO_0000071787" description="V-type proton ATPase subunit c'">
    <location>
        <begin position="1"/>
        <end position="162"/>
    </location>
</feature>
<feature type="topological domain" description="Lumenal" evidence="2">
    <location>
        <begin position="1"/>
        <end position="11"/>
    </location>
</feature>
<feature type="transmembrane region" description="Helical" evidence="2">
    <location>
        <begin position="12"/>
        <end position="32"/>
    </location>
</feature>
<feature type="topological domain" description="Cytoplasmic" evidence="2">
    <location>
        <begin position="33"/>
        <end position="54"/>
    </location>
</feature>
<feature type="transmembrane region" description="Helical" evidence="2">
    <location>
        <begin position="55"/>
        <end position="75"/>
    </location>
</feature>
<feature type="topological domain" description="Lumenal" evidence="2">
    <location>
        <begin position="76"/>
        <end position="93"/>
    </location>
</feature>
<feature type="transmembrane region" description="Helical" evidence="2">
    <location>
        <begin position="94"/>
        <end position="114"/>
    </location>
</feature>
<feature type="topological domain" description="Cytoplasmic" evidence="2">
    <location>
        <begin position="115"/>
        <end position="132"/>
    </location>
</feature>
<feature type="transmembrane region" description="Helical" evidence="2">
    <location>
        <begin position="133"/>
        <end position="153"/>
    </location>
</feature>
<feature type="topological domain" description="Lumenal" evidence="2">
    <location>
        <begin position="154"/>
        <end position="162"/>
    </location>
</feature>
<feature type="site" description="Essential for proton translocation" evidence="1">
    <location>
        <position position="140"/>
    </location>
</feature>
<name>VATL2_SCHPO</name>
<keyword id="KW-0375">Hydrogen ion transport</keyword>
<keyword id="KW-0406">Ion transport</keyword>
<keyword id="KW-0472">Membrane</keyword>
<keyword id="KW-1185">Reference proteome</keyword>
<keyword id="KW-0812">Transmembrane</keyword>
<keyword id="KW-1133">Transmembrane helix</keyword>
<keyword id="KW-0813">Transport</keyword>
<keyword id="KW-0926">Vacuole</keyword>
<reference key="1">
    <citation type="journal article" date="2002" name="Nature">
        <title>The genome sequence of Schizosaccharomyces pombe.</title>
        <authorList>
            <person name="Wood V."/>
            <person name="Gwilliam R."/>
            <person name="Rajandream M.A."/>
            <person name="Lyne M.H."/>
            <person name="Lyne R."/>
            <person name="Stewart A."/>
            <person name="Sgouros J.G."/>
            <person name="Peat N."/>
            <person name="Hayles J."/>
            <person name="Baker S.G."/>
            <person name="Basham D."/>
            <person name="Bowman S."/>
            <person name="Brooks K."/>
            <person name="Brown D."/>
            <person name="Brown S."/>
            <person name="Chillingworth T."/>
            <person name="Churcher C.M."/>
            <person name="Collins M."/>
            <person name="Connor R."/>
            <person name="Cronin A."/>
            <person name="Davis P."/>
            <person name="Feltwell T."/>
            <person name="Fraser A."/>
            <person name="Gentles S."/>
            <person name="Goble A."/>
            <person name="Hamlin N."/>
            <person name="Harris D.E."/>
            <person name="Hidalgo J."/>
            <person name="Hodgson G."/>
            <person name="Holroyd S."/>
            <person name="Hornsby T."/>
            <person name="Howarth S."/>
            <person name="Huckle E.J."/>
            <person name="Hunt S."/>
            <person name="Jagels K."/>
            <person name="James K.D."/>
            <person name="Jones L."/>
            <person name="Jones M."/>
            <person name="Leather S."/>
            <person name="McDonald S."/>
            <person name="McLean J."/>
            <person name="Mooney P."/>
            <person name="Moule S."/>
            <person name="Mungall K.L."/>
            <person name="Murphy L.D."/>
            <person name="Niblett D."/>
            <person name="Odell C."/>
            <person name="Oliver K."/>
            <person name="O'Neil S."/>
            <person name="Pearson D."/>
            <person name="Quail M.A."/>
            <person name="Rabbinowitsch E."/>
            <person name="Rutherford K.M."/>
            <person name="Rutter S."/>
            <person name="Saunders D."/>
            <person name="Seeger K."/>
            <person name="Sharp S."/>
            <person name="Skelton J."/>
            <person name="Simmonds M.N."/>
            <person name="Squares R."/>
            <person name="Squares S."/>
            <person name="Stevens K."/>
            <person name="Taylor K."/>
            <person name="Taylor R.G."/>
            <person name="Tivey A."/>
            <person name="Walsh S.V."/>
            <person name="Warren T."/>
            <person name="Whitehead S."/>
            <person name="Woodward J.R."/>
            <person name="Volckaert G."/>
            <person name="Aert R."/>
            <person name="Robben J."/>
            <person name="Grymonprez B."/>
            <person name="Weltjens I."/>
            <person name="Vanstreels E."/>
            <person name="Rieger M."/>
            <person name="Schaefer M."/>
            <person name="Mueller-Auer S."/>
            <person name="Gabel C."/>
            <person name="Fuchs M."/>
            <person name="Duesterhoeft A."/>
            <person name="Fritzc C."/>
            <person name="Holzer E."/>
            <person name="Moestl D."/>
            <person name="Hilbert H."/>
            <person name="Borzym K."/>
            <person name="Langer I."/>
            <person name="Beck A."/>
            <person name="Lehrach H."/>
            <person name="Reinhardt R."/>
            <person name="Pohl T.M."/>
            <person name="Eger P."/>
            <person name="Zimmermann W."/>
            <person name="Wedler H."/>
            <person name="Wambutt R."/>
            <person name="Purnelle B."/>
            <person name="Goffeau A."/>
            <person name="Cadieu E."/>
            <person name="Dreano S."/>
            <person name="Gloux S."/>
            <person name="Lelaure V."/>
            <person name="Mottier S."/>
            <person name="Galibert F."/>
            <person name="Aves S.J."/>
            <person name="Xiang Z."/>
            <person name="Hunt C."/>
            <person name="Moore K."/>
            <person name="Hurst S.M."/>
            <person name="Lucas M."/>
            <person name="Rochet M."/>
            <person name="Gaillardin C."/>
            <person name="Tallada V.A."/>
            <person name="Garzon A."/>
            <person name="Thode G."/>
            <person name="Daga R.R."/>
            <person name="Cruzado L."/>
            <person name="Jimenez J."/>
            <person name="Sanchez M."/>
            <person name="del Rey F."/>
            <person name="Benito J."/>
            <person name="Dominguez A."/>
            <person name="Revuelta J.L."/>
            <person name="Moreno S."/>
            <person name="Armstrong J."/>
            <person name="Forsburg S.L."/>
            <person name="Cerutti L."/>
            <person name="Lowe T."/>
            <person name="McCombie W.R."/>
            <person name="Paulsen I."/>
            <person name="Potashkin J."/>
            <person name="Shpakovski G.V."/>
            <person name="Ussery D."/>
            <person name="Barrell B.G."/>
            <person name="Nurse P."/>
        </authorList>
    </citation>
    <scope>NUCLEOTIDE SEQUENCE [LARGE SCALE GENOMIC DNA]</scope>
    <source>
        <strain>972 / ATCC 24843</strain>
    </source>
</reference>
<evidence type="ECO:0000250" key="1">
    <source>
        <dbReference type="UniProtKB" id="P32842"/>
    </source>
</evidence>
<evidence type="ECO:0000255" key="2"/>
<evidence type="ECO:0000305" key="3"/>
<evidence type="ECO:0000312" key="4">
    <source>
        <dbReference type="PomBase" id="SPAC732.01"/>
    </source>
</evidence>
<comment type="function">
    <text evidence="1">Proton-conducting pore forming subunit of the V0 complex of vacuolar(H+)-ATPase (V-ATPase), a multisubunit enzyme composed of a peripheral complex (V1) that hydrolyzes ATP and a membrane integral complex (V0) that translocates protons (By similarity). V-ATPase is responsible for acidifying and maintaining the pH of intracellular compartments (By similarity).</text>
</comment>
<comment type="subunit">
    <text evidence="1">V-ATPase is a heteromultimeric enzyme composed of a peripheral catalytic V1 complex (components A to H) attached to an integral membrane V0 proton pore complex (components: a, c, c', c'', d, e, f and VOA1) (By similarity). The decameric c-ring forms the proton-conducting pore, and is composed of eight proteolipid subunits c, one subunit c' and one subunit c'' (By similarity).</text>
</comment>
<comment type="subcellular location">
    <subcellularLocation>
        <location evidence="1">Vacuole membrane</location>
        <topology evidence="2">Multi-pass membrane protein</topology>
    </subcellularLocation>
</comment>
<comment type="similarity">
    <text evidence="3">Belongs to the V-ATPase proteolipid subunit family.</text>
</comment>
<dbReference type="EMBL" id="CU329670">
    <property type="protein sequence ID" value="CAB62424.1"/>
    <property type="molecule type" value="Genomic_DNA"/>
</dbReference>
<dbReference type="PIR" id="T50253">
    <property type="entry name" value="T50253"/>
</dbReference>
<dbReference type="RefSeq" id="NP_593600.1">
    <property type="nucleotide sequence ID" value="NM_001019031.2"/>
</dbReference>
<dbReference type="SMR" id="Q9URZ8"/>
<dbReference type="BioGRID" id="278273">
    <property type="interactions" value="1"/>
</dbReference>
<dbReference type="FunCoup" id="Q9URZ8">
    <property type="interactions" value="132"/>
</dbReference>
<dbReference type="STRING" id="284812.Q9URZ8"/>
<dbReference type="PaxDb" id="4896-SPAC732.01.1"/>
<dbReference type="EnsemblFungi" id="SPAC732.01.1">
    <property type="protein sequence ID" value="SPAC732.01.1:pep"/>
    <property type="gene ID" value="SPAC732.01"/>
</dbReference>
<dbReference type="GeneID" id="2541780"/>
<dbReference type="KEGG" id="spo:2541780"/>
<dbReference type="PomBase" id="SPAC732.01">
    <property type="gene designation" value="vma11"/>
</dbReference>
<dbReference type="VEuPathDB" id="FungiDB:SPAC732.01"/>
<dbReference type="eggNOG" id="KOG0232">
    <property type="taxonomic scope" value="Eukaryota"/>
</dbReference>
<dbReference type="HOGENOM" id="CLU_085752_1_1_1"/>
<dbReference type="InParanoid" id="Q9URZ8"/>
<dbReference type="OMA" id="MSVCPPY"/>
<dbReference type="PhylomeDB" id="Q9URZ8"/>
<dbReference type="PRO" id="PR:Q9URZ8"/>
<dbReference type="Proteomes" id="UP000002485">
    <property type="component" value="Chromosome I"/>
</dbReference>
<dbReference type="GO" id="GO:0000329">
    <property type="term" value="C:fungal-type vacuole membrane"/>
    <property type="evidence" value="ECO:0000305"/>
    <property type="project" value="PomBase"/>
</dbReference>
<dbReference type="GO" id="GO:0016020">
    <property type="term" value="C:membrane"/>
    <property type="evidence" value="ECO:0000318"/>
    <property type="project" value="GO_Central"/>
</dbReference>
<dbReference type="GO" id="GO:0000220">
    <property type="term" value="C:vacuolar proton-transporting V-type ATPase, V0 domain"/>
    <property type="evidence" value="ECO:0000266"/>
    <property type="project" value="PomBase"/>
</dbReference>
<dbReference type="GO" id="GO:0016887">
    <property type="term" value="F:ATP hydrolysis activity"/>
    <property type="evidence" value="ECO:0000305"/>
    <property type="project" value="PomBase"/>
</dbReference>
<dbReference type="GO" id="GO:0046961">
    <property type="term" value="F:proton-transporting ATPase activity, rotational mechanism"/>
    <property type="evidence" value="ECO:0000266"/>
    <property type="project" value="PomBase"/>
</dbReference>
<dbReference type="GO" id="GO:1902600">
    <property type="term" value="P:proton transmembrane transport"/>
    <property type="evidence" value="ECO:0000305"/>
    <property type="project" value="PomBase"/>
</dbReference>
<dbReference type="CDD" id="cd18175">
    <property type="entry name" value="ATP-synt_Vo_c_ATP6C_rpt1"/>
    <property type="match status" value="1"/>
</dbReference>
<dbReference type="CDD" id="cd18176">
    <property type="entry name" value="ATP-synt_Vo_c_ATP6C_rpt2"/>
    <property type="match status" value="1"/>
</dbReference>
<dbReference type="FunFam" id="1.20.120.610:FF:000003">
    <property type="entry name" value="V-type proton ATPase proteolipid subunit"/>
    <property type="match status" value="1"/>
</dbReference>
<dbReference type="Gene3D" id="1.20.120.610">
    <property type="entry name" value="lithium bound rotor ring of v- atpase"/>
    <property type="match status" value="1"/>
</dbReference>
<dbReference type="InterPro" id="IPR002379">
    <property type="entry name" value="ATPase_proteolipid_c-like_dom"/>
</dbReference>
<dbReference type="InterPro" id="IPR000245">
    <property type="entry name" value="ATPase_proteolipid_csu"/>
</dbReference>
<dbReference type="InterPro" id="IPR011555">
    <property type="entry name" value="ATPase_proteolipid_su_C_euk"/>
</dbReference>
<dbReference type="InterPro" id="IPR035921">
    <property type="entry name" value="F/V-ATP_Csub_sf"/>
</dbReference>
<dbReference type="NCBIfam" id="TIGR01100">
    <property type="entry name" value="V_ATP_synt_C"/>
    <property type="match status" value="1"/>
</dbReference>
<dbReference type="PANTHER" id="PTHR10263">
    <property type="entry name" value="V-TYPE PROTON ATPASE PROTEOLIPID SUBUNIT"/>
    <property type="match status" value="1"/>
</dbReference>
<dbReference type="Pfam" id="PF00137">
    <property type="entry name" value="ATP-synt_C"/>
    <property type="match status" value="2"/>
</dbReference>
<dbReference type="PRINTS" id="PR00122">
    <property type="entry name" value="VACATPASE"/>
</dbReference>
<dbReference type="SUPFAM" id="SSF81333">
    <property type="entry name" value="F1F0 ATP synthase subunit C"/>
    <property type="match status" value="1"/>
</dbReference>
<sequence length="162" mass="16785">MSSNLCPIYSSFFGFAGVCASMVFSCLGAGYGTALAGRGIAAVGAFRPEIVMKSLIPVVMSGIIGVYGLVMSVLIAGDMSPDNDYSLFSGFIHLSAGLAVGLTGVAAGYAIGVVGDRGVQSFMRQDRIFVSMVLILIFAEVLGLYGLIVGLILQTKTSNVCY</sequence>
<gene>
    <name evidence="4" type="primary">vma11</name>
    <name evidence="4" type="ORF">SPAC732.01</name>
</gene>
<proteinExistence type="inferred from homology"/>
<organism>
    <name type="scientific">Schizosaccharomyces pombe (strain 972 / ATCC 24843)</name>
    <name type="common">Fission yeast</name>
    <dbReference type="NCBI Taxonomy" id="284812"/>
    <lineage>
        <taxon>Eukaryota</taxon>
        <taxon>Fungi</taxon>
        <taxon>Dikarya</taxon>
        <taxon>Ascomycota</taxon>
        <taxon>Taphrinomycotina</taxon>
        <taxon>Schizosaccharomycetes</taxon>
        <taxon>Schizosaccharomycetales</taxon>
        <taxon>Schizosaccharomycetaceae</taxon>
        <taxon>Schizosaccharomyces</taxon>
    </lineage>
</organism>
<accession>Q9URZ8</accession>